<evidence type="ECO:0000255" key="1"/>
<evidence type="ECO:0000269" key="2">
    <source>
    </source>
</evidence>
<evidence type="ECO:0000303" key="3">
    <source>
    </source>
</evidence>
<evidence type="ECO:0000305" key="4"/>
<evidence type="ECO:0000312" key="5">
    <source>
        <dbReference type="EMBL" id="AAN23902.1"/>
    </source>
</evidence>
<organism>
    <name type="scientific">Bifidobacterium longum (strain NCC 2705)</name>
    <dbReference type="NCBI Taxonomy" id="206672"/>
    <lineage>
        <taxon>Bacteria</taxon>
        <taxon>Bacillati</taxon>
        <taxon>Actinomycetota</taxon>
        <taxon>Actinomycetes</taxon>
        <taxon>Bifidobacteriales</taxon>
        <taxon>Bifidobacteriaceae</taxon>
        <taxon>Bifidobacterium</taxon>
    </lineage>
</organism>
<gene>
    <name evidence="3" type="primary">fruF</name>
    <name evidence="5" type="ordered locus">BL0035</name>
</gene>
<accession>Q8G846</accession>
<reference key="1">
    <citation type="journal article" date="2002" name="Proc. Natl. Acad. Sci. U.S.A.">
        <title>The genome sequence of Bifidobacterium longum reflects its adaptation to the human gastrointestinal tract.</title>
        <authorList>
            <person name="Schell M.A."/>
            <person name="Karmirantzou M."/>
            <person name="Snel B."/>
            <person name="Vilanova D."/>
            <person name="Berger B."/>
            <person name="Pessi G."/>
            <person name="Zwahlen M.-C."/>
            <person name="Desiere F."/>
            <person name="Bork P."/>
            <person name="Delley M."/>
            <person name="Pridmore R.D."/>
            <person name="Arigoni F."/>
        </authorList>
    </citation>
    <scope>NUCLEOTIDE SEQUENCE [LARGE SCALE GENOMIC DNA]</scope>
    <source>
        <strain>NCC 2705</strain>
    </source>
</reference>
<reference key="2">
    <citation type="journal article" date="2012" name="J. Biol. Chem.">
        <title>Fructose uptake in Bifidobacterium longum NCC2705 is mediated by an ATP-binding cassette transporter.</title>
        <authorList>
            <person name="Wei X."/>
            <person name="Guo Y."/>
            <person name="Shao C."/>
            <person name="Sun Z."/>
            <person name="Zhurina D."/>
            <person name="Liu D."/>
            <person name="Liu W."/>
            <person name="Zou D."/>
            <person name="Jiang Z."/>
            <person name="Wang X."/>
            <person name="Zhao J."/>
            <person name="Shang W."/>
            <person name="Li X."/>
            <person name="Liao X."/>
            <person name="Huang L."/>
            <person name="Riedel C.U."/>
            <person name="Yuan J."/>
        </authorList>
    </citation>
    <scope>FUNCTION</scope>
    <scope>SUBUNIT</scope>
    <scope>INTERACTION WITH FRUK AND FRUE</scope>
    <source>
        <strain>NCC 2705</strain>
    </source>
</reference>
<dbReference type="EMBL" id="AE014295">
    <property type="protein sequence ID" value="AAN23902.1"/>
    <property type="molecule type" value="Genomic_DNA"/>
</dbReference>
<dbReference type="RefSeq" id="NP_695266.1">
    <property type="nucleotide sequence ID" value="NC_004307.2"/>
</dbReference>
<dbReference type="RefSeq" id="WP_007053224.1">
    <property type="nucleotide sequence ID" value="NC_004307.2"/>
</dbReference>
<dbReference type="STRING" id="206672.BL0035"/>
<dbReference type="TCDB" id="3.A.1.2.23">
    <property type="family name" value="the atp-binding cassette (abc) superfamily"/>
</dbReference>
<dbReference type="EnsemblBacteria" id="AAN23902">
    <property type="protein sequence ID" value="AAN23902"/>
    <property type="gene ID" value="BL0035"/>
</dbReference>
<dbReference type="KEGG" id="blo:BL0035"/>
<dbReference type="PATRIC" id="fig|206672.9.peg.37"/>
<dbReference type="HOGENOM" id="CLU_028880_3_0_11"/>
<dbReference type="OrthoDB" id="9808136at2"/>
<dbReference type="PhylomeDB" id="Q8G846"/>
<dbReference type="Proteomes" id="UP000000439">
    <property type="component" value="Chromosome"/>
</dbReference>
<dbReference type="GO" id="GO:0005886">
    <property type="term" value="C:plasma membrane"/>
    <property type="evidence" value="ECO:0007669"/>
    <property type="project" value="UniProtKB-SubCell"/>
</dbReference>
<dbReference type="GO" id="GO:0022857">
    <property type="term" value="F:transmembrane transporter activity"/>
    <property type="evidence" value="ECO:0007669"/>
    <property type="project" value="InterPro"/>
</dbReference>
<dbReference type="CDD" id="cd06579">
    <property type="entry name" value="TM_PBP1_transp_AraH_like"/>
    <property type="match status" value="1"/>
</dbReference>
<dbReference type="InterPro" id="IPR001851">
    <property type="entry name" value="ABC_transp_permease"/>
</dbReference>
<dbReference type="PANTHER" id="PTHR32196">
    <property type="entry name" value="ABC TRANSPORTER PERMEASE PROTEIN YPHD-RELATED-RELATED"/>
    <property type="match status" value="1"/>
</dbReference>
<dbReference type="PANTHER" id="PTHR32196:SF19">
    <property type="entry name" value="GALACTOFURANOSE TRANSPORTER PERMEASE PROTEIN YTFT"/>
    <property type="match status" value="1"/>
</dbReference>
<dbReference type="Pfam" id="PF02653">
    <property type="entry name" value="BPD_transp_2"/>
    <property type="match status" value="1"/>
</dbReference>
<proteinExistence type="evidence at protein level"/>
<name>FRUF_BIFLO</name>
<keyword id="KW-1003">Cell membrane</keyword>
<keyword id="KW-0472">Membrane</keyword>
<keyword id="KW-1185">Reference proteome</keyword>
<keyword id="KW-0762">Sugar transport</keyword>
<keyword id="KW-0812">Transmembrane</keyword>
<keyword id="KW-1133">Transmembrane helix</keyword>
<keyword id="KW-0813">Transport</keyword>
<sequence length="356" mass="37049">MAEKAKAEGNNFVKKLLSSNLTWSIVAFILLVIICTIFQHDFLALSWNSNTGGLAGPLITMLQESARYLMIATGMTLVISTAGIDLSVGSVMAVAGAAAMQTLSNGMNVWLSILIALAVGLAIGCVNGALVSFLGLQPFITTLIMMLAGRGMAKVITSGENTDASAVAGNEPLKWFANGFILGIPANFVIAVIIVILVGLLCRKTAMGMMIEAVGINQEASRMTGIKPKKILFLVYAISGFLAAIAGLFATASVMRVDVVKTGQDLEMYAILAVVIGGTSLLGGKFSLAGSAVGAVIIAMIRKTIITLGVNAEATPAFFAVVVIVICVMQAPKIHNLSANMKRKRALKAQAKAVAA</sequence>
<comment type="function">
    <text evidence="2">Part of the high-affinity ABC transporter complex FruEKFG involved in fructose uptake. Can also transport ribose and xylose, with lower affinity. Probably responsible for the translocation of the substrate across the membrane.</text>
</comment>
<comment type="subunit">
    <text evidence="2">The complex is composed of an ATP-binding protein (FruK), two transmembrane proteins (FruF and FruG) and a solute-binding protein (FruE).</text>
</comment>
<comment type="subcellular location">
    <subcellularLocation>
        <location evidence="4">Cell membrane</location>
        <topology evidence="1">Multi-pass membrane protein</topology>
    </subcellularLocation>
</comment>
<comment type="similarity">
    <text evidence="4">Belongs to the binding-protein-dependent transport system permease family.</text>
</comment>
<protein>
    <recommendedName>
        <fullName evidence="4">Fructose import permease protein FruF</fullName>
    </recommendedName>
</protein>
<feature type="chain" id="PRO_0000439270" description="Fructose import permease protein FruF">
    <location>
        <begin position="1"/>
        <end position="356"/>
    </location>
</feature>
<feature type="transmembrane region" description="Helical" evidence="1">
    <location>
        <begin position="25"/>
        <end position="45"/>
    </location>
</feature>
<feature type="transmembrane region" description="Helical" evidence="1">
    <location>
        <begin position="77"/>
        <end position="97"/>
    </location>
</feature>
<feature type="transmembrane region" description="Helical" evidence="1">
    <location>
        <begin position="113"/>
        <end position="133"/>
    </location>
</feature>
<feature type="transmembrane region" description="Helical" evidence="1">
    <location>
        <begin position="180"/>
        <end position="200"/>
    </location>
</feature>
<feature type="transmembrane region" description="Helical" evidence="1">
    <location>
        <begin position="231"/>
        <end position="251"/>
    </location>
</feature>
<feature type="transmembrane region" description="Helical" evidence="1">
    <location>
        <begin position="268"/>
        <end position="290"/>
    </location>
</feature>
<feature type="transmembrane region" description="Helical" evidence="1">
    <location>
        <begin position="308"/>
        <end position="328"/>
    </location>
</feature>